<proteinExistence type="evidence at protein level"/>
<comment type="interaction">
    <interactant intactId="EBI-741214">
        <id>Q9UFG5</id>
    </interactant>
    <interactant intactId="EBI-638194">
        <id>P53365</id>
        <label>ARFIP2</label>
    </interactant>
    <organismsDiffer>false</organismsDiffer>
    <experiments>3</experiments>
</comment>
<comment type="interaction">
    <interactant intactId="EBI-741214">
        <id>Q9UFG5</id>
    </interactant>
    <interactant intactId="EBI-525456">
        <id>Q9UQB8</id>
        <label>BAIAP2</label>
    </interactant>
    <organismsDiffer>false</organismsDiffer>
    <experiments>3</experiments>
</comment>
<comment type="interaction">
    <interactant intactId="EBI-741214">
        <id>Q9UFG5</id>
    </interactant>
    <interactant intactId="EBI-10193358">
        <id>Q96GS4</id>
        <label>BORCS6</label>
    </interactant>
    <organismsDiffer>false</organismsDiffer>
    <experiments>3</experiments>
</comment>
<comment type="interaction">
    <interactant intactId="EBI-741214">
        <id>Q9UFG5</id>
    </interactant>
    <interactant intactId="EBI-739674">
        <id>Q15834</id>
        <label>CCDC85B</label>
    </interactant>
    <organismsDiffer>false</organismsDiffer>
    <experiments>2</experiments>
</comment>
<comment type="interaction">
    <interactant intactId="EBI-741214">
        <id>Q9UFG5</id>
    </interactant>
    <interactant intactId="EBI-748171">
        <id>O43186</id>
        <label>CRX</label>
    </interactant>
    <organismsDiffer>false</organismsDiffer>
    <experiments>3</experiments>
</comment>
<comment type="interaction">
    <interactant intactId="EBI-741214">
        <id>Q9UFG5</id>
    </interactant>
    <interactant intactId="EBI-742054">
        <id>Q96D03</id>
        <label>DDIT4L</label>
    </interactant>
    <organismsDiffer>false</organismsDiffer>
    <experiments>3</experiments>
</comment>
<comment type="interaction">
    <interactant intactId="EBI-741214">
        <id>Q9UFG5</id>
    </interactant>
    <interactant intactId="EBI-11974185">
        <id>Q494R4-2</id>
        <label>DRC12</label>
    </interactant>
    <organismsDiffer>false</organismsDiffer>
    <experiments>3</experiments>
</comment>
<comment type="interaction">
    <interactant intactId="EBI-741214">
        <id>Q9UFG5</id>
    </interactant>
    <interactant intactId="EBI-375576">
        <id>Q12929</id>
        <label>EPS8</label>
    </interactant>
    <organismsDiffer>false</organismsDiffer>
    <experiments>3</experiments>
</comment>
<comment type="interaction">
    <interactant intactId="EBI-741214">
        <id>Q9UFG5</id>
    </interactant>
    <interactant intactId="EBI-852851">
        <id>P01100</id>
        <label>FOS</label>
    </interactant>
    <organismsDiffer>false</organismsDiffer>
    <experiments>3</experiments>
</comment>
<comment type="interaction">
    <interactant intactId="EBI-741214">
        <id>Q9UFG5</id>
    </interactant>
    <interactant intactId="EBI-4311436">
        <id>Q2T9L4</id>
        <label>INSYN1</label>
    </interactant>
    <organismsDiffer>false</organismsDiffer>
    <experiments>3</experiments>
</comment>
<comment type="interaction">
    <interactant intactId="EBI-741214">
        <id>Q9UFG5</id>
    </interactant>
    <interactant intactId="EBI-2949715">
        <id>O95678</id>
        <label>KRT75</label>
    </interactant>
    <organismsDiffer>false</organismsDiffer>
    <experiments>3</experiments>
</comment>
<comment type="interaction">
    <interactant intactId="EBI-741214">
        <id>Q9UFG5</id>
    </interactant>
    <interactant intactId="EBI-11749135">
        <id>Q8IUG1</id>
        <label>KRTAP1-3</label>
    </interactant>
    <organismsDiffer>false</organismsDiffer>
    <experiments>3</experiments>
</comment>
<comment type="interaction">
    <interactant intactId="EBI-741214">
        <id>Q9UFG5</id>
    </interactant>
    <interactant intactId="EBI-10171774">
        <id>P60410</id>
        <label>KRTAP10-8</label>
    </interactant>
    <organismsDiffer>false</organismsDiffer>
    <experiments>3</experiments>
</comment>
<comment type="interaction">
    <interactant intactId="EBI-741214">
        <id>Q9UFG5</id>
    </interactant>
    <interactant intactId="EBI-19944212">
        <id>A8MW99</id>
        <label>MEI4</label>
    </interactant>
    <organismsDiffer>false</organismsDiffer>
    <experiments>3</experiments>
</comment>
<comment type="interaction">
    <interactant intactId="EBI-741214">
        <id>Q9UFG5</id>
    </interactant>
    <interactant intactId="EBI-10172876">
        <id>Q7Z6G3-2</id>
        <label>NECAB2</label>
    </interactant>
    <organismsDiffer>false</organismsDiffer>
    <experiments>3</experiments>
</comment>
<comment type="interaction">
    <interactant intactId="EBI-741214">
        <id>Q9UFG5</id>
    </interactant>
    <interactant intactId="EBI-11278955">
        <id>Q9UL41</id>
        <label>PNMA3</label>
    </interactant>
    <organismsDiffer>false</organismsDiffer>
    <experiments>3</experiments>
</comment>
<comment type="interaction">
    <interactant intactId="EBI-741214">
        <id>Q9UFG5</id>
    </interactant>
    <interactant intactId="EBI-726876">
        <id>Q6NUQ1</id>
        <label>RINT1</label>
    </interactant>
    <organismsDiffer>false</organismsDiffer>
    <experiments>6</experiments>
</comment>
<comment type="interaction">
    <interactant intactId="EBI-741214">
        <id>Q9UFG5</id>
    </interactant>
    <interactant intactId="EBI-711613">
        <id>P21673</id>
        <label>SAT1</label>
    </interactant>
    <organismsDiffer>false</organismsDiffer>
    <experiments>3</experiments>
</comment>
<comment type="interaction">
    <interactant intactId="EBI-741214">
        <id>Q9UFG5</id>
    </interactant>
    <interactant intactId="EBI-1245626">
        <id>P0C1Z6</id>
        <label>TFPT</label>
    </interactant>
    <organismsDiffer>false</organismsDiffer>
    <experiments>3</experiments>
</comment>
<comment type="interaction">
    <interactant intactId="EBI-741214">
        <id>Q9UFG5</id>
    </interactant>
    <interactant intactId="EBI-1052596">
        <id>P31930</id>
        <label>UQCRC1</label>
    </interactant>
    <organismsDiffer>false</organismsDiffer>
    <experiments>3</experiments>
</comment>
<comment type="alternative products">
    <event type="alternative splicing"/>
    <isoform>
        <id>Q9UFG5-1</id>
        <name>1</name>
        <sequence type="displayed"/>
    </isoform>
    <isoform>
        <id>Q9UFG5-2</id>
        <name>2</name>
        <sequence type="described" ref="VSP_020961"/>
    </isoform>
</comment>
<comment type="similarity">
    <text evidence="4">Belongs to the UPF0449 family.</text>
</comment>
<name>CS025_HUMAN</name>
<sequence length="118" mass="12878">MGSKAKKRVLLPTRPAPPTVEQILEDVRGAPAEDPVFTILAPEDPPVPFRMMEDAEAPGEQLYQQSRAYVAANQRLQQAGNVLRQRCELLQRAGEDLEREVAQMKQAALPAAEAASSG</sequence>
<gene>
    <name type="primary">C19orf25</name>
</gene>
<organism>
    <name type="scientific">Homo sapiens</name>
    <name type="common">Human</name>
    <dbReference type="NCBI Taxonomy" id="9606"/>
    <lineage>
        <taxon>Eukaryota</taxon>
        <taxon>Metazoa</taxon>
        <taxon>Chordata</taxon>
        <taxon>Craniata</taxon>
        <taxon>Vertebrata</taxon>
        <taxon>Euteleostomi</taxon>
        <taxon>Mammalia</taxon>
        <taxon>Eutheria</taxon>
        <taxon>Euarchontoglires</taxon>
        <taxon>Primates</taxon>
        <taxon>Haplorrhini</taxon>
        <taxon>Catarrhini</taxon>
        <taxon>Hominidae</taxon>
        <taxon>Homo</taxon>
    </lineage>
</organism>
<reference key="1">
    <citation type="journal article" date="2004" name="Nat. Genet.">
        <title>Complete sequencing and characterization of 21,243 full-length human cDNAs.</title>
        <authorList>
            <person name="Ota T."/>
            <person name="Suzuki Y."/>
            <person name="Nishikawa T."/>
            <person name="Otsuki T."/>
            <person name="Sugiyama T."/>
            <person name="Irie R."/>
            <person name="Wakamatsu A."/>
            <person name="Hayashi K."/>
            <person name="Sato H."/>
            <person name="Nagai K."/>
            <person name="Kimura K."/>
            <person name="Makita H."/>
            <person name="Sekine M."/>
            <person name="Obayashi M."/>
            <person name="Nishi T."/>
            <person name="Shibahara T."/>
            <person name="Tanaka T."/>
            <person name="Ishii S."/>
            <person name="Yamamoto J."/>
            <person name="Saito K."/>
            <person name="Kawai Y."/>
            <person name="Isono Y."/>
            <person name="Nakamura Y."/>
            <person name="Nagahari K."/>
            <person name="Murakami K."/>
            <person name="Yasuda T."/>
            <person name="Iwayanagi T."/>
            <person name="Wagatsuma M."/>
            <person name="Shiratori A."/>
            <person name="Sudo H."/>
            <person name="Hosoiri T."/>
            <person name="Kaku Y."/>
            <person name="Kodaira H."/>
            <person name="Kondo H."/>
            <person name="Sugawara M."/>
            <person name="Takahashi M."/>
            <person name="Kanda K."/>
            <person name="Yokoi T."/>
            <person name="Furuya T."/>
            <person name="Kikkawa E."/>
            <person name="Omura Y."/>
            <person name="Abe K."/>
            <person name="Kamihara K."/>
            <person name="Katsuta N."/>
            <person name="Sato K."/>
            <person name="Tanikawa M."/>
            <person name="Yamazaki M."/>
            <person name="Ninomiya K."/>
            <person name="Ishibashi T."/>
            <person name="Yamashita H."/>
            <person name="Murakawa K."/>
            <person name="Fujimori K."/>
            <person name="Tanai H."/>
            <person name="Kimata M."/>
            <person name="Watanabe M."/>
            <person name="Hiraoka S."/>
            <person name="Chiba Y."/>
            <person name="Ishida S."/>
            <person name="Ono Y."/>
            <person name="Takiguchi S."/>
            <person name="Watanabe S."/>
            <person name="Yosida M."/>
            <person name="Hotuta T."/>
            <person name="Kusano J."/>
            <person name="Kanehori K."/>
            <person name="Takahashi-Fujii A."/>
            <person name="Hara H."/>
            <person name="Tanase T.-O."/>
            <person name="Nomura Y."/>
            <person name="Togiya S."/>
            <person name="Komai F."/>
            <person name="Hara R."/>
            <person name="Takeuchi K."/>
            <person name="Arita M."/>
            <person name="Imose N."/>
            <person name="Musashino K."/>
            <person name="Yuuki H."/>
            <person name="Oshima A."/>
            <person name="Sasaki N."/>
            <person name="Aotsuka S."/>
            <person name="Yoshikawa Y."/>
            <person name="Matsunawa H."/>
            <person name="Ichihara T."/>
            <person name="Shiohata N."/>
            <person name="Sano S."/>
            <person name="Moriya S."/>
            <person name="Momiyama H."/>
            <person name="Satoh N."/>
            <person name="Takami S."/>
            <person name="Terashima Y."/>
            <person name="Suzuki O."/>
            <person name="Nakagawa S."/>
            <person name="Senoh A."/>
            <person name="Mizoguchi H."/>
            <person name="Goto Y."/>
            <person name="Shimizu F."/>
            <person name="Wakebe H."/>
            <person name="Hishigaki H."/>
            <person name="Watanabe T."/>
            <person name="Sugiyama A."/>
            <person name="Takemoto M."/>
            <person name="Kawakami B."/>
            <person name="Yamazaki M."/>
            <person name="Watanabe K."/>
            <person name="Kumagai A."/>
            <person name="Itakura S."/>
            <person name="Fukuzumi Y."/>
            <person name="Fujimori Y."/>
            <person name="Komiyama M."/>
            <person name="Tashiro H."/>
            <person name="Tanigami A."/>
            <person name="Fujiwara T."/>
            <person name="Ono T."/>
            <person name="Yamada K."/>
            <person name="Fujii Y."/>
            <person name="Ozaki K."/>
            <person name="Hirao M."/>
            <person name="Ohmori Y."/>
            <person name="Kawabata A."/>
            <person name="Hikiji T."/>
            <person name="Kobatake N."/>
            <person name="Inagaki H."/>
            <person name="Ikema Y."/>
            <person name="Okamoto S."/>
            <person name="Okitani R."/>
            <person name="Kawakami T."/>
            <person name="Noguchi S."/>
            <person name="Itoh T."/>
            <person name="Shigeta K."/>
            <person name="Senba T."/>
            <person name="Matsumura K."/>
            <person name="Nakajima Y."/>
            <person name="Mizuno T."/>
            <person name="Morinaga M."/>
            <person name="Sasaki M."/>
            <person name="Togashi T."/>
            <person name="Oyama M."/>
            <person name="Hata H."/>
            <person name="Watanabe M."/>
            <person name="Komatsu T."/>
            <person name="Mizushima-Sugano J."/>
            <person name="Satoh T."/>
            <person name="Shirai Y."/>
            <person name="Takahashi Y."/>
            <person name="Nakagawa K."/>
            <person name="Okumura K."/>
            <person name="Nagase T."/>
            <person name="Nomura N."/>
            <person name="Kikuchi H."/>
            <person name="Masuho Y."/>
            <person name="Yamashita R."/>
            <person name="Nakai K."/>
            <person name="Yada T."/>
            <person name="Nakamura Y."/>
            <person name="Ohara O."/>
            <person name="Isogai T."/>
            <person name="Sugano S."/>
        </authorList>
    </citation>
    <scope>NUCLEOTIDE SEQUENCE [LARGE SCALE MRNA] (ISOFORM 2)</scope>
    <source>
        <tissue>Uterus</tissue>
    </source>
</reference>
<reference key="2">
    <citation type="journal article" date="2005" name="DNA Res.">
        <title>Signal sequence and keyword trap in silico for selection of full-length human cDNAs encoding secretion or membrane proteins from oligo-capped cDNA libraries.</title>
        <authorList>
            <person name="Otsuki T."/>
            <person name="Ota T."/>
            <person name="Nishikawa T."/>
            <person name="Hayashi K."/>
            <person name="Suzuki Y."/>
            <person name="Yamamoto J."/>
            <person name="Wakamatsu A."/>
            <person name="Kimura K."/>
            <person name="Sakamoto K."/>
            <person name="Hatano N."/>
            <person name="Kawai Y."/>
            <person name="Ishii S."/>
            <person name="Saito K."/>
            <person name="Kojima S."/>
            <person name="Sugiyama T."/>
            <person name="Ono T."/>
            <person name="Okano K."/>
            <person name="Yoshikawa Y."/>
            <person name="Aotsuka S."/>
            <person name="Sasaki N."/>
            <person name="Hattori A."/>
            <person name="Okumura K."/>
            <person name="Nagai K."/>
            <person name="Sugano S."/>
            <person name="Isogai T."/>
        </authorList>
    </citation>
    <scope>NUCLEOTIDE SEQUENCE [LARGE SCALE MRNA] (ISOFORM 1)</scope>
    <source>
        <tissue>Thyroid</tissue>
    </source>
</reference>
<reference key="3">
    <citation type="journal article" date="2007" name="BMC Genomics">
        <title>The full-ORF clone resource of the German cDNA consortium.</title>
        <authorList>
            <person name="Bechtel S."/>
            <person name="Rosenfelder H."/>
            <person name="Duda A."/>
            <person name="Schmidt C.P."/>
            <person name="Ernst U."/>
            <person name="Wellenreuther R."/>
            <person name="Mehrle A."/>
            <person name="Schuster C."/>
            <person name="Bahr A."/>
            <person name="Bloecker H."/>
            <person name="Heubner D."/>
            <person name="Hoerlein A."/>
            <person name="Michel G."/>
            <person name="Wedler H."/>
            <person name="Koehrer K."/>
            <person name="Ottenwaelder B."/>
            <person name="Poustka A."/>
            <person name="Wiemann S."/>
            <person name="Schupp I."/>
        </authorList>
    </citation>
    <scope>NUCLEOTIDE SEQUENCE [LARGE SCALE MRNA] (ISOFORM 1)</scope>
    <source>
        <tissue>Kidney</tissue>
    </source>
</reference>
<reference key="4">
    <citation type="journal article" date="2004" name="Genome Res.">
        <title>The status, quality, and expansion of the NIH full-length cDNA project: the Mammalian Gene Collection (MGC).</title>
        <authorList>
            <consortium name="The MGC Project Team"/>
        </authorList>
    </citation>
    <scope>NUCLEOTIDE SEQUENCE [LARGE SCALE MRNA] (ISOFORM 1)</scope>
    <source>
        <tissue>Liver</tissue>
    </source>
</reference>
<dbReference type="EMBL" id="AK093985">
    <property type="protein sequence ID" value="BAC04262.1"/>
    <property type="molecule type" value="mRNA"/>
</dbReference>
<dbReference type="EMBL" id="AK075267">
    <property type="protein sequence ID" value="BAG52098.1"/>
    <property type="molecule type" value="mRNA"/>
</dbReference>
<dbReference type="EMBL" id="AL122089">
    <property type="protein sequence ID" value="CAB59260.2"/>
    <property type="molecule type" value="mRNA"/>
</dbReference>
<dbReference type="EMBL" id="BC018441">
    <property type="protein sequence ID" value="AAH18441.1"/>
    <property type="molecule type" value="mRNA"/>
</dbReference>
<dbReference type="CCDS" id="CCDS45898.1">
    <molecule id="Q9UFG5-1"/>
</dbReference>
<dbReference type="PIR" id="T34521">
    <property type="entry name" value="T34521"/>
</dbReference>
<dbReference type="RefSeq" id="NP_689695.2">
    <molecule id="Q9UFG5-1"/>
    <property type="nucleotide sequence ID" value="NM_152482.3"/>
</dbReference>
<dbReference type="RefSeq" id="XP_005259563.1">
    <property type="nucleotide sequence ID" value="XM_005259506.3"/>
</dbReference>
<dbReference type="RefSeq" id="XP_006722716.1">
    <molecule id="Q9UFG5-1"/>
    <property type="nucleotide sequence ID" value="XM_006722653.4"/>
</dbReference>
<dbReference type="RefSeq" id="XP_054175977.1">
    <molecule id="Q9UFG5-1"/>
    <property type="nucleotide sequence ID" value="XM_054320002.1"/>
</dbReference>
<dbReference type="SMR" id="Q9UFG5"/>
<dbReference type="BioGRID" id="127131">
    <property type="interactions" value="105"/>
</dbReference>
<dbReference type="FunCoup" id="Q9UFG5">
    <property type="interactions" value="597"/>
</dbReference>
<dbReference type="IntAct" id="Q9UFG5">
    <property type="interactions" value="78"/>
</dbReference>
<dbReference type="MINT" id="Q9UFG5"/>
<dbReference type="STRING" id="9606.ENSP00000397394"/>
<dbReference type="iPTMnet" id="Q9UFG5"/>
<dbReference type="PhosphoSitePlus" id="Q9UFG5"/>
<dbReference type="BioMuta" id="C19orf25"/>
<dbReference type="DMDM" id="74735005"/>
<dbReference type="jPOST" id="Q9UFG5"/>
<dbReference type="MassIVE" id="Q9UFG5"/>
<dbReference type="PaxDb" id="9606-ENSP00000397394"/>
<dbReference type="PeptideAtlas" id="Q9UFG5"/>
<dbReference type="ProteomicsDB" id="84183">
    <molecule id="Q9UFG5-1"/>
</dbReference>
<dbReference type="ProteomicsDB" id="84184">
    <molecule id="Q9UFG5-2"/>
</dbReference>
<dbReference type="Pumba" id="Q9UFG5"/>
<dbReference type="Antibodypedia" id="59259">
    <property type="antibodies" value="24 antibodies from 9 providers"/>
</dbReference>
<dbReference type="DNASU" id="148223"/>
<dbReference type="Ensembl" id="ENST00000436106.3">
    <molecule id="Q9UFG5-1"/>
    <property type="protein sequence ID" value="ENSP00000397394.1"/>
    <property type="gene ID" value="ENSG00000119559.17"/>
</dbReference>
<dbReference type="Ensembl" id="ENST00000585675.6">
    <molecule id="Q9UFG5-1"/>
    <property type="protein sequence ID" value="ENSP00000468688.2"/>
    <property type="gene ID" value="ENSG00000119559.17"/>
</dbReference>
<dbReference type="Ensembl" id="ENST00000586564.5">
    <molecule id="Q9UFG5-1"/>
    <property type="protein sequence ID" value="ENSP00000466372.1"/>
    <property type="gene ID" value="ENSG00000119559.17"/>
</dbReference>
<dbReference type="Ensembl" id="ENST00000592872.5">
    <molecule id="Q9UFG5-1"/>
    <property type="protein sequence ID" value="ENSP00000467861.1"/>
    <property type="gene ID" value="ENSG00000119559.17"/>
</dbReference>
<dbReference type="GeneID" id="148223"/>
<dbReference type="KEGG" id="hsa:148223"/>
<dbReference type="MANE-Select" id="ENST00000585675.6">
    <property type="protein sequence ID" value="ENSP00000468688.2"/>
    <property type="RefSeq nucleotide sequence ID" value="NM_152482.3"/>
    <property type="RefSeq protein sequence ID" value="NP_689695.2"/>
</dbReference>
<dbReference type="UCSC" id="uc010dsk.4">
    <molecule id="Q9UFG5-1"/>
    <property type="organism name" value="human"/>
</dbReference>
<dbReference type="AGR" id="HGNC:26711"/>
<dbReference type="CTD" id="148223"/>
<dbReference type="GeneCards" id="C19orf25"/>
<dbReference type="HGNC" id="HGNC:26711">
    <property type="gene designation" value="C19orf25"/>
</dbReference>
<dbReference type="HPA" id="ENSG00000119559">
    <property type="expression patterns" value="Low tissue specificity"/>
</dbReference>
<dbReference type="neXtProt" id="NX_Q9UFG5"/>
<dbReference type="OpenTargets" id="ENSG00000119559"/>
<dbReference type="PharmGKB" id="PA134878893"/>
<dbReference type="VEuPathDB" id="HostDB:ENSG00000119559"/>
<dbReference type="eggNOG" id="ENOG502SDTN">
    <property type="taxonomic scope" value="Eukaryota"/>
</dbReference>
<dbReference type="GeneTree" id="ENSGT00390000007991"/>
<dbReference type="HOGENOM" id="CLU_141103_1_0_1"/>
<dbReference type="InParanoid" id="Q9UFG5"/>
<dbReference type="OrthoDB" id="6129359at2759"/>
<dbReference type="PAN-GO" id="Q9UFG5">
    <property type="GO annotations" value="0 GO annotations based on evolutionary models"/>
</dbReference>
<dbReference type="PhylomeDB" id="Q9UFG5"/>
<dbReference type="TreeFam" id="TF330719"/>
<dbReference type="PathwayCommons" id="Q9UFG5"/>
<dbReference type="SignaLink" id="Q9UFG5"/>
<dbReference type="BioGRID-ORCS" id="148223">
    <property type="hits" value="218 hits in 1133 CRISPR screens"/>
</dbReference>
<dbReference type="ChiTaRS" id="C19orf25">
    <property type="organism name" value="human"/>
</dbReference>
<dbReference type="GeneWiki" id="C19orf25"/>
<dbReference type="GenomeRNAi" id="148223"/>
<dbReference type="Pharos" id="Q9UFG5">
    <property type="development level" value="Tdark"/>
</dbReference>
<dbReference type="PRO" id="PR:Q9UFG5"/>
<dbReference type="Proteomes" id="UP000005640">
    <property type="component" value="Chromosome 19"/>
</dbReference>
<dbReference type="RNAct" id="Q9UFG5">
    <property type="molecule type" value="protein"/>
</dbReference>
<dbReference type="Bgee" id="ENSG00000119559">
    <property type="expression patterns" value="Expressed in C1 segment of cervical spinal cord and 162 other cell types or tissues"/>
</dbReference>
<dbReference type="ExpressionAtlas" id="Q9UFG5">
    <property type="expression patterns" value="baseline and differential"/>
</dbReference>
<dbReference type="InterPro" id="IPR028227">
    <property type="entry name" value="UPF0449"/>
</dbReference>
<dbReference type="PANTHER" id="PTHR34766">
    <property type="entry name" value="UPF0449 PROTEIN C19ORF25"/>
    <property type="match status" value="1"/>
</dbReference>
<dbReference type="PANTHER" id="PTHR34766:SF1">
    <property type="entry name" value="UPF0449 PROTEIN C19ORF25"/>
    <property type="match status" value="1"/>
</dbReference>
<dbReference type="Pfam" id="PF15136">
    <property type="entry name" value="UPF0449"/>
    <property type="match status" value="1"/>
</dbReference>
<protein>
    <recommendedName>
        <fullName>UPF0449 protein C19orf25</fullName>
    </recommendedName>
</protein>
<evidence type="ECO:0000250" key="1">
    <source>
        <dbReference type="UniProtKB" id="Q9D7E4"/>
    </source>
</evidence>
<evidence type="ECO:0000255" key="2"/>
<evidence type="ECO:0000303" key="3">
    <source>
    </source>
</evidence>
<evidence type="ECO:0000305" key="4"/>
<feature type="chain" id="PRO_0000252420" description="UPF0449 protein C19orf25">
    <location>
        <begin position="1"/>
        <end position="118"/>
    </location>
</feature>
<feature type="coiled-coil region" evidence="2">
    <location>
        <begin position="81"/>
        <end position="109"/>
    </location>
</feature>
<feature type="modified residue" description="Phosphotyrosine" evidence="1">
    <location>
        <position position="63"/>
    </location>
</feature>
<feature type="splice variant" id="VSP_020961" description="In isoform 2." evidence="3">
    <original>LRQRCELLQRAGEDLEREVAQMKQAALPAAEAASSG</original>
    <variation>PRLPPQADLSGPAGLGSAQGGLHPGFPWGSVGPRLAFTGSQPTWVLTQAPLLMLGLRFIRRLIHAELVGPTQLAPSCVT</variation>
    <location>
        <begin position="83"/>
        <end position="118"/>
    </location>
</feature>
<accession>Q9UFG5</accession>
<accession>B3KQN6</accession>
<accession>Q8N9R7</accession>
<accession>Q8WV94</accession>
<keyword id="KW-0025">Alternative splicing</keyword>
<keyword id="KW-0175">Coiled coil</keyword>
<keyword id="KW-0597">Phosphoprotein</keyword>
<keyword id="KW-1267">Proteomics identification</keyword>
<keyword id="KW-1185">Reference proteome</keyword>